<dbReference type="EC" id="2.3.1.31" evidence="1 2"/>
<dbReference type="EMBL" id="CP000742">
    <property type="protein sequence ID" value="ABR54083.1"/>
    <property type="molecule type" value="Genomic_DNA"/>
</dbReference>
<dbReference type="RefSeq" id="WP_011971987.1">
    <property type="nucleotide sequence ID" value="NC_009634.1"/>
</dbReference>
<dbReference type="SMR" id="A6UNL1"/>
<dbReference type="STRING" id="406327.Mevan_0172"/>
<dbReference type="ESTHER" id="metvs-a6unl1">
    <property type="family name" value="Homoserine_transacetylase"/>
</dbReference>
<dbReference type="GeneID" id="5324542"/>
<dbReference type="KEGG" id="mvn:Mevan_0172"/>
<dbReference type="eggNOG" id="arCOG00627">
    <property type="taxonomic scope" value="Archaea"/>
</dbReference>
<dbReference type="HOGENOM" id="CLU_028760_1_1_2"/>
<dbReference type="OrthoDB" id="295172at2157"/>
<dbReference type="UniPathway" id="UPA00051">
    <property type="reaction ID" value="UER00074"/>
</dbReference>
<dbReference type="Proteomes" id="UP000001107">
    <property type="component" value="Chromosome"/>
</dbReference>
<dbReference type="GO" id="GO:0005737">
    <property type="term" value="C:cytoplasm"/>
    <property type="evidence" value="ECO:0007669"/>
    <property type="project" value="UniProtKB-SubCell"/>
</dbReference>
<dbReference type="GO" id="GO:0004414">
    <property type="term" value="F:homoserine O-acetyltransferase activity"/>
    <property type="evidence" value="ECO:0007669"/>
    <property type="project" value="UniProtKB-UniRule"/>
</dbReference>
<dbReference type="GO" id="GO:0009092">
    <property type="term" value="P:homoserine metabolic process"/>
    <property type="evidence" value="ECO:0007669"/>
    <property type="project" value="TreeGrafter"/>
</dbReference>
<dbReference type="GO" id="GO:0009086">
    <property type="term" value="P:methionine biosynthetic process"/>
    <property type="evidence" value="ECO:0007669"/>
    <property type="project" value="UniProtKB-UniRule"/>
</dbReference>
<dbReference type="CDD" id="cd04605">
    <property type="entry name" value="CBS_pair_arch_MET2_assoc"/>
    <property type="match status" value="1"/>
</dbReference>
<dbReference type="FunFam" id="1.10.1740.110:FF:000001">
    <property type="entry name" value="Homoserine O-acetyltransferase"/>
    <property type="match status" value="1"/>
</dbReference>
<dbReference type="Gene3D" id="1.10.1740.110">
    <property type="match status" value="1"/>
</dbReference>
<dbReference type="Gene3D" id="3.40.50.1820">
    <property type="entry name" value="alpha/beta hydrolase"/>
    <property type="match status" value="1"/>
</dbReference>
<dbReference type="Gene3D" id="3.10.580.10">
    <property type="entry name" value="CBS-domain"/>
    <property type="match status" value="1"/>
</dbReference>
<dbReference type="HAMAP" id="MF_00296">
    <property type="entry name" value="MetX_acyltransf"/>
    <property type="match status" value="1"/>
</dbReference>
<dbReference type="InterPro" id="IPR000073">
    <property type="entry name" value="AB_hydrolase_1"/>
</dbReference>
<dbReference type="InterPro" id="IPR029058">
    <property type="entry name" value="AB_hydrolase_fold"/>
</dbReference>
<dbReference type="InterPro" id="IPR000644">
    <property type="entry name" value="CBS_dom"/>
</dbReference>
<dbReference type="InterPro" id="IPR046342">
    <property type="entry name" value="CBS_dom_sf"/>
</dbReference>
<dbReference type="InterPro" id="IPR008220">
    <property type="entry name" value="HAT_MetX-like"/>
</dbReference>
<dbReference type="NCBIfam" id="TIGR01392">
    <property type="entry name" value="homoserO_Ac_trn"/>
    <property type="match status" value="1"/>
</dbReference>
<dbReference type="NCBIfam" id="NF001209">
    <property type="entry name" value="PRK00175.1"/>
    <property type="match status" value="1"/>
</dbReference>
<dbReference type="PANTHER" id="PTHR32268">
    <property type="entry name" value="HOMOSERINE O-ACETYLTRANSFERASE"/>
    <property type="match status" value="1"/>
</dbReference>
<dbReference type="PANTHER" id="PTHR32268:SF11">
    <property type="entry name" value="HOMOSERINE O-ACETYLTRANSFERASE"/>
    <property type="match status" value="1"/>
</dbReference>
<dbReference type="Pfam" id="PF00561">
    <property type="entry name" value="Abhydrolase_1"/>
    <property type="match status" value="1"/>
</dbReference>
<dbReference type="Pfam" id="PF00571">
    <property type="entry name" value="CBS"/>
    <property type="match status" value="2"/>
</dbReference>
<dbReference type="SMART" id="SM00116">
    <property type="entry name" value="CBS"/>
    <property type="match status" value="2"/>
</dbReference>
<dbReference type="SUPFAM" id="SSF53474">
    <property type="entry name" value="alpha/beta-Hydrolases"/>
    <property type="match status" value="1"/>
</dbReference>
<dbReference type="SUPFAM" id="SSF54631">
    <property type="entry name" value="CBS-domain pair"/>
    <property type="match status" value="1"/>
</dbReference>
<dbReference type="PROSITE" id="PS51371">
    <property type="entry name" value="CBS"/>
    <property type="match status" value="2"/>
</dbReference>
<reference key="1">
    <citation type="submission" date="2007-06" db="EMBL/GenBank/DDBJ databases">
        <title>Complete sequence of Methanococcus vannielii SB.</title>
        <authorList>
            <consortium name="US DOE Joint Genome Institute"/>
            <person name="Copeland A."/>
            <person name="Lucas S."/>
            <person name="Lapidus A."/>
            <person name="Barry K."/>
            <person name="Glavina del Rio T."/>
            <person name="Dalin E."/>
            <person name="Tice H."/>
            <person name="Pitluck S."/>
            <person name="Chain P."/>
            <person name="Malfatti S."/>
            <person name="Shin M."/>
            <person name="Vergez L."/>
            <person name="Schmutz J."/>
            <person name="Larimer F."/>
            <person name="Land M."/>
            <person name="Hauser L."/>
            <person name="Kyrpides N."/>
            <person name="Anderson I."/>
            <person name="Sieprawska-Lupa M."/>
            <person name="Whitman W.B."/>
            <person name="Richardson P."/>
        </authorList>
    </citation>
    <scope>NUCLEOTIDE SEQUENCE [LARGE SCALE GENOMIC DNA]</scope>
    <source>
        <strain>ATCC 35089 / DSM 1224 / JCM 13029 / OCM 148 / SB</strain>
    </source>
</reference>
<reference key="2">
    <citation type="journal article" date="2017" name="Nat. Chem. Biol.">
        <title>Parallel evolution of non-homologous isofunctional enzymes in methionine biosynthesis.</title>
        <authorList>
            <person name="Bastard K."/>
            <person name="Perret A."/>
            <person name="Mariage A."/>
            <person name="Bessonnet T."/>
            <person name="Pinet-Turpault A."/>
            <person name="Petit J.L."/>
            <person name="Darii E."/>
            <person name="Bazire P."/>
            <person name="Vergne-Vaxelaire C."/>
            <person name="Brewee C."/>
            <person name="Debard A."/>
            <person name="Pellouin V."/>
            <person name="Besnard-Gonnet M."/>
            <person name="Artiguenave F."/>
            <person name="Medigue C."/>
            <person name="Vallenet D."/>
            <person name="Danchin A."/>
            <person name="Zaparucha A."/>
            <person name="Weissenbach J."/>
            <person name="Salanoubat M."/>
            <person name="de Berardinis V."/>
        </authorList>
    </citation>
    <scope>FUNCTION</scope>
    <scope>CATALYTIC ACTIVITY</scope>
</reference>
<comment type="function">
    <text evidence="1 2">Transfers an acetyl group from acetyl-CoA to L-homoserine, forming acetyl-L-homoserine.</text>
</comment>
<comment type="catalytic activity">
    <reaction evidence="1 2">
        <text>L-homoserine + acetyl-CoA = O-acetyl-L-homoserine + CoA</text>
        <dbReference type="Rhea" id="RHEA:13701"/>
        <dbReference type="ChEBI" id="CHEBI:57287"/>
        <dbReference type="ChEBI" id="CHEBI:57288"/>
        <dbReference type="ChEBI" id="CHEBI:57476"/>
        <dbReference type="ChEBI" id="CHEBI:57716"/>
        <dbReference type="EC" id="2.3.1.31"/>
    </reaction>
</comment>
<comment type="pathway">
    <text evidence="1">Amino-acid biosynthesis; L-methionine biosynthesis via de novo pathway; O-acetyl-L-homoserine from L-homoserine: step 1/1.</text>
</comment>
<comment type="subunit">
    <text evidence="1">Homodimer.</text>
</comment>
<comment type="subcellular location">
    <subcellularLocation>
        <location evidence="1">Cytoplasm</location>
    </subcellularLocation>
</comment>
<comment type="similarity">
    <text evidence="1">Belongs to the AB hydrolase superfamily. MetX family.</text>
</comment>
<feature type="chain" id="PRO_0000440294" description="Homoserine O-acetyltransferase">
    <location>
        <begin position="1"/>
        <end position="492"/>
    </location>
</feature>
<feature type="domain" description="AB hydrolase-1" evidence="1">
    <location>
        <begin position="47"/>
        <end position="352"/>
    </location>
</feature>
<feature type="domain" description="CBS 1" evidence="1">
    <location>
        <begin position="375"/>
        <end position="431"/>
    </location>
</feature>
<feature type="domain" description="CBS 2" evidence="1">
    <location>
        <begin position="440"/>
        <end position="492"/>
    </location>
</feature>
<feature type="active site" description="Nucleophile" evidence="1">
    <location>
        <position position="152"/>
    </location>
</feature>
<feature type="active site" evidence="1">
    <location>
        <position position="315"/>
    </location>
</feature>
<feature type="active site" evidence="1">
    <location>
        <position position="348"/>
    </location>
</feature>
<feature type="binding site" evidence="1">
    <location>
        <position position="221"/>
    </location>
    <ligand>
        <name>substrate</name>
    </ligand>
</feature>
<feature type="binding site" evidence="1">
    <location>
        <position position="349"/>
    </location>
    <ligand>
        <name>substrate</name>
    </ligand>
</feature>
<name>METXA_METVS</name>
<keyword id="KW-0012">Acyltransferase</keyword>
<keyword id="KW-0028">Amino-acid biosynthesis</keyword>
<keyword id="KW-0129">CBS domain</keyword>
<keyword id="KW-0963">Cytoplasm</keyword>
<keyword id="KW-0486">Methionine biosynthesis</keyword>
<keyword id="KW-0677">Repeat</keyword>
<keyword id="KW-0808">Transferase</keyword>
<evidence type="ECO:0000255" key="1">
    <source>
        <dbReference type="HAMAP-Rule" id="MF_00296"/>
    </source>
</evidence>
<evidence type="ECO:0000269" key="2">
    <source>
    </source>
</evidence>
<evidence type="ECO:0000303" key="3">
    <source>
    </source>
</evidence>
<evidence type="ECO:0000312" key="4">
    <source>
        <dbReference type="EMBL" id="ABR54083.1"/>
    </source>
</evidence>
<proteinExistence type="evidence at protein level"/>
<accession>A6UNL1</accession>
<protein>
    <recommendedName>
        <fullName evidence="1">Homoserine O-acetyltransferase</fullName>
        <shortName evidence="1 3">HAT</shortName>
        <ecNumber evidence="1 2">2.3.1.31</ecNumber>
    </recommendedName>
    <alternativeName>
        <fullName evidence="1">Homoserine transacetylase</fullName>
        <shortName evidence="1">HTA</shortName>
    </alternativeName>
</protein>
<sequence length="492" mass="54644">MKKGSVGNVETKTYALPNELVLKSGKTLKEVNIAYETYGKLNKDKNNAILVFHALSGNAHAAGIHKTDGKLGWWDALIGPLKCIDTNKYFVICSNVLGGCNGTTGPSSINPDTNKPYGIDFPVITISDMVTLQKNLIDHLGIKKLFSIIGGSMGGMQALEWCATYPEVINSAVIIATTSSSSPQQIAFNEIGRRAIMSDPKWDGGKYYYKNQPSEGLALARMIGHVTYLSKDSMHEKFGRCLQDKNEYGFNFETDFQVESYLKYQGDSFTKRFDANSYLYLTKALDYFDLTKNGSLSDAFEKLSAKIMIVSINSDWLYTPEEAKEIVSAMSTSGINVKYHEIKSIYGHDAFLIENGQMSYIISEFLSEKIVENIMTKNFSTIYENETIKKAASLMVSKNITHIPVVSNENKLLGIITAWDVSKSIAEENSIENIKISQMMTKNVITAFIDDKIEKIAIKMQEYNISCLPVVDQNGLVIGMISAENITNTITI</sequence>
<organism>
    <name type="scientific">Methanococcus vannielii (strain ATCC 35089 / DSM 1224 / JCM 13029 / OCM 148 / SB)</name>
    <dbReference type="NCBI Taxonomy" id="406327"/>
    <lineage>
        <taxon>Archaea</taxon>
        <taxon>Methanobacteriati</taxon>
        <taxon>Methanobacteriota</taxon>
        <taxon>Methanomada group</taxon>
        <taxon>Methanococci</taxon>
        <taxon>Methanococcales</taxon>
        <taxon>Methanococcaceae</taxon>
        <taxon>Methanococcus</taxon>
    </lineage>
</organism>
<gene>
    <name evidence="1 3" type="primary">metXA</name>
    <name evidence="4" type="ordered locus">Mevan_0172</name>
</gene>